<sequence>MHWGMEMNVEQAIEYVKKNNVKFIRFQFVDILGFPKNVAYPVKAGEKGIEELREIFENGVWFDGSSITGFVGIEESDMLLKPDLSTLSVLPWRPEEKSVARVICDVYKDEKTPFEGDPRSRLKAILEELKKEMNGEYFVGPEPEFFLLKRDPHNPHRWVPADDGGYFDVEPLDDAPDIRRDIVLALENLGFHVEASHHEVAPGQHEVDFKFDNALKTADSVITFKMTIKNIAKKHGLKATFMPKPFFGMNGNGMHCHQSVWFNGEPSFYDPEGPYNGLSETCLSYIAGILSHAKALVAITNPTVNSYKRLVPGYEAPVNIAWANKNRSAIIRVPAARGKATRIEFRAPDPTCNPYLAFACMLAAGLDGIKKKMTAPEPVERNIFKMSEEEKKQLGIESVPANLAAALDELECDEVLQKALGKHIYENYMEIKRAEWDDFRTAVTDWETGKYLIY</sequence>
<reference key="1">
    <citation type="journal article" date="1996" name="Science">
        <title>Complete genome sequence of the methanogenic archaeon, Methanococcus jannaschii.</title>
        <authorList>
            <person name="Bult C.J."/>
            <person name="White O."/>
            <person name="Olsen G.J."/>
            <person name="Zhou L."/>
            <person name="Fleischmann R.D."/>
            <person name="Sutton G.G."/>
            <person name="Blake J.A."/>
            <person name="FitzGerald L.M."/>
            <person name="Clayton R.A."/>
            <person name="Gocayne J.D."/>
            <person name="Kerlavage A.R."/>
            <person name="Dougherty B.A."/>
            <person name="Tomb J.-F."/>
            <person name="Adams M.D."/>
            <person name="Reich C.I."/>
            <person name="Overbeek R."/>
            <person name="Kirkness E.F."/>
            <person name="Weinstock K.G."/>
            <person name="Merrick J.M."/>
            <person name="Glodek A."/>
            <person name="Scott J.L."/>
            <person name="Geoghagen N.S.M."/>
            <person name="Weidman J.F."/>
            <person name="Fuhrmann J.L."/>
            <person name="Nguyen D."/>
            <person name="Utterback T.R."/>
            <person name="Kelley J.M."/>
            <person name="Peterson J.D."/>
            <person name="Sadow P.W."/>
            <person name="Hanna M.C."/>
            <person name="Cotton M.D."/>
            <person name="Roberts K.M."/>
            <person name="Hurst M.A."/>
            <person name="Kaine B.P."/>
            <person name="Borodovsky M."/>
            <person name="Klenk H.-P."/>
            <person name="Fraser C.M."/>
            <person name="Smith H.O."/>
            <person name="Woese C.R."/>
            <person name="Venter J.C."/>
        </authorList>
    </citation>
    <scope>NUCLEOTIDE SEQUENCE [LARGE SCALE GENOMIC DNA]</scope>
    <source>
        <strain>ATCC 43067 / DSM 2661 / JAL-1 / JCM 10045 / NBRC 100440</strain>
    </source>
</reference>
<reference key="2">
    <citation type="journal article" date="2001" name="Appl. Environ. Microbiol.">
        <title>beta-Glutamate as a substrate for glutamine synthetase.</title>
        <authorList>
            <person name="Robinson P."/>
            <person name="Neelon K."/>
            <person name="Schreier H.J."/>
            <person name="Roberts M.F."/>
        </authorList>
    </citation>
    <scope>FUNCTION</scope>
    <scope>CATALYTIC ACTIVITY</scope>
    <scope>BIOPHYSICOCHEMICAL PROPERTIES</scope>
    <scope>ACTIVITY REGULATION</scope>
    <scope>COFACTOR</scope>
    <scope>SUBUNIT</scope>
    <scope>SUBSTRATE SPECIFICITY</scope>
</reference>
<protein>
    <recommendedName>
        <fullName evidence="9">Glutamine synthetase</fullName>
        <shortName evidence="9">GS</shortName>
        <ecNumber evidence="8">6.3.1.2</ecNumber>
    </recommendedName>
    <alternativeName>
        <fullName evidence="5">Glutamate--ammonia ligase</fullName>
    </alternativeName>
    <alternativeName>
        <fullName evidence="9">Glutamine synthetase I alpha</fullName>
        <shortName evidence="9">GSI alpha</shortName>
    </alternativeName>
</protein>
<name>GLNA_METJA</name>
<feature type="chain" id="PRO_0000153204" description="Glutamine synthetase">
    <location>
        <begin position="1"/>
        <end position="454"/>
    </location>
</feature>
<feature type="domain" description="GS beta-grasp" evidence="6">
    <location>
        <begin position="19"/>
        <end position="111"/>
    </location>
</feature>
<feature type="domain" description="GS catalytic" evidence="7">
    <location>
        <begin position="118"/>
        <end position="454"/>
    </location>
</feature>
<feature type="binding site" evidence="4">
    <location>
        <position position="142"/>
    </location>
    <ligand>
        <name>Mg(2+)</name>
        <dbReference type="ChEBI" id="CHEBI:18420"/>
        <label>1</label>
    </ligand>
</feature>
<feature type="binding site" evidence="4">
    <location>
        <position position="144"/>
    </location>
    <ligand>
        <name>Mg(2+)</name>
        <dbReference type="ChEBI" id="CHEBI:18420"/>
        <label>2</label>
    </ligand>
</feature>
<feature type="binding site" evidence="4">
    <location>
        <position position="194"/>
    </location>
    <ligand>
        <name>ATP</name>
        <dbReference type="ChEBI" id="CHEBI:30616"/>
    </ligand>
</feature>
<feature type="binding site" evidence="4">
    <location>
        <position position="199"/>
    </location>
    <ligand>
        <name>Mg(2+)</name>
        <dbReference type="ChEBI" id="CHEBI:18420"/>
        <label>2</label>
    </ligand>
</feature>
<feature type="binding site" evidence="4">
    <location>
        <position position="206"/>
    </location>
    <ligand>
        <name>Mg(2+)</name>
        <dbReference type="ChEBI" id="CHEBI:18420"/>
        <label>2</label>
    </ligand>
</feature>
<feature type="binding site" evidence="4">
    <location>
        <begin position="250"/>
        <end position="251"/>
    </location>
    <ligand>
        <name>L-glutamate</name>
        <dbReference type="ChEBI" id="CHEBI:29985"/>
    </ligand>
</feature>
<feature type="binding site" evidence="2">
    <location>
        <position position="251"/>
    </location>
    <ligand>
        <name>L-glutamate</name>
        <dbReference type="ChEBI" id="CHEBI:29985"/>
    </ligand>
</feature>
<feature type="binding site" evidence="4">
    <location>
        <position position="255"/>
    </location>
    <ligand>
        <name>Mg(2+)</name>
        <dbReference type="ChEBI" id="CHEBI:18420"/>
        <label>1</label>
    </ligand>
</feature>
<feature type="binding site" evidence="4">
    <location>
        <begin position="257"/>
        <end position="259"/>
    </location>
    <ligand>
        <name>ATP</name>
        <dbReference type="ChEBI" id="CHEBI:30616"/>
    </ligand>
</feature>
<feature type="binding site" evidence="3">
    <location>
        <position position="259"/>
    </location>
    <ligand>
        <name>ATP</name>
        <dbReference type="ChEBI" id="CHEBI:30616"/>
    </ligand>
</feature>
<feature type="binding site" evidence="4">
    <location>
        <position position="309"/>
    </location>
    <ligand>
        <name>L-glutamate</name>
        <dbReference type="ChEBI" id="CHEBI:29985"/>
    </ligand>
</feature>
<feature type="binding site" evidence="1">
    <location>
        <position position="315"/>
    </location>
    <ligand>
        <name>L-glutamate</name>
        <dbReference type="ChEBI" id="CHEBI:29985"/>
    </ligand>
</feature>
<feature type="binding site" evidence="4">
    <location>
        <position position="327"/>
    </location>
    <ligand>
        <name>ATP</name>
        <dbReference type="ChEBI" id="CHEBI:30616"/>
    </ligand>
</feature>
<feature type="binding site" evidence="4">
    <location>
        <position position="327"/>
    </location>
    <ligand>
        <name>L-glutamate</name>
        <dbReference type="ChEBI" id="CHEBI:29985"/>
    </ligand>
</feature>
<feature type="binding site" evidence="4">
    <location>
        <position position="332"/>
    </location>
    <ligand>
        <name>ATP</name>
        <dbReference type="ChEBI" id="CHEBI:30616"/>
    </ligand>
</feature>
<feature type="binding site" evidence="3">
    <location>
        <position position="339"/>
    </location>
    <ligand>
        <name>ATP</name>
        <dbReference type="ChEBI" id="CHEBI:30616"/>
    </ligand>
</feature>
<feature type="binding site" evidence="4">
    <location>
        <position position="344"/>
    </location>
    <ligand>
        <name>Mg(2+)</name>
        <dbReference type="ChEBI" id="CHEBI:18420"/>
        <label>1</label>
    </ligand>
</feature>
<feature type="binding site" evidence="4">
    <location>
        <position position="346"/>
    </location>
    <ligand>
        <name>L-glutamate</name>
        <dbReference type="ChEBI" id="CHEBI:29985"/>
    </ligand>
</feature>
<organism>
    <name type="scientific">Methanocaldococcus jannaschii (strain ATCC 43067 / DSM 2661 / JAL-1 / JCM 10045 / NBRC 100440)</name>
    <name type="common">Methanococcus jannaschii</name>
    <dbReference type="NCBI Taxonomy" id="243232"/>
    <lineage>
        <taxon>Archaea</taxon>
        <taxon>Methanobacteriati</taxon>
        <taxon>Methanobacteriota</taxon>
        <taxon>Methanomada group</taxon>
        <taxon>Methanococci</taxon>
        <taxon>Methanococcales</taxon>
        <taxon>Methanocaldococcaceae</taxon>
        <taxon>Methanocaldococcus</taxon>
    </lineage>
</organism>
<proteinExistence type="evidence at protein level"/>
<gene>
    <name evidence="5" type="primary">glnA</name>
    <name type="ordered locus">MJ1346</name>
</gene>
<comment type="function">
    <text evidence="8">Probably involved in nitrogen metabolism via ammonium assimilation. Catalyzes the ATP-dependent biosynthesis of glutamine from glutamate and ammonia. Beta-glutamate is a much poorer substrate than alpha-glutamate.</text>
</comment>
<comment type="catalytic activity">
    <reaction evidence="8">
        <text>L-glutamate + NH4(+) + ATP = L-glutamine + ADP + phosphate + H(+)</text>
        <dbReference type="Rhea" id="RHEA:16169"/>
        <dbReference type="ChEBI" id="CHEBI:15378"/>
        <dbReference type="ChEBI" id="CHEBI:28938"/>
        <dbReference type="ChEBI" id="CHEBI:29985"/>
        <dbReference type="ChEBI" id="CHEBI:30616"/>
        <dbReference type="ChEBI" id="CHEBI:43474"/>
        <dbReference type="ChEBI" id="CHEBI:58359"/>
        <dbReference type="ChEBI" id="CHEBI:456216"/>
        <dbReference type="EC" id="6.3.1.2"/>
    </reaction>
</comment>
<comment type="cofactor">
    <cofactor evidence="8">
        <name>Mg(2+)</name>
        <dbReference type="ChEBI" id="CHEBI:18420"/>
    </cofactor>
    <text evidence="4">Binds 2 Mg(2+) ions per subunit.</text>
</comment>
<comment type="activity regulation">
    <text evidence="10">Feedback inhibited by glycine and alanine, and inhibited by low concentrations of methionine sulfoximine.</text>
</comment>
<comment type="biophysicochemical properties">
    <kinetics>
        <KM evidence="8">23 mM for alpha-glutamine (at 37 degrees Celsius)</KM>
        <KM evidence="8">40 mM for alpha-glutamine (at 50 degrees Celsius)</KM>
        <KM evidence="8">58 mM for alpha-glutamate (at 60 degrees Celsius)</KM>
        <Vmax evidence="8">26.7 umol/min/mg enzyme toward alpha-glutamine (at 50 degrees Celsius)</Vmax>
        <Vmax evidence="8">3.5 umol/min/mg enzyme toward alpha-glutamine (at 37 degrees Celsius)</Vmax>
        <Vmax evidence="8">1.3 umol/min/mg enzyme toward alpha-glutamate (at 60 degrees Celsius)</Vmax>
    </kinetics>
</comment>
<comment type="subunit">
    <text evidence="10">Oligomer of 12 subunits arranged in the form of two hexagons.</text>
</comment>
<comment type="subcellular location">
    <subcellularLocation>
        <location evidence="5">Cytoplasm</location>
    </subcellularLocation>
</comment>
<comment type="similarity">
    <text evidence="5">Belongs to the glutamine synthetase family.</text>
</comment>
<keyword id="KW-0067">ATP-binding</keyword>
<keyword id="KW-0963">Cytoplasm</keyword>
<keyword id="KW-0436">Ligase</keyword>
<keyword id="KW-0460">Magnesium</keyword>
<keyword id="KW-0479">Metal-binding</keyword>
<keyword id="KW-0547">Nucleotide-binding</keyword>
<keyword id="KW-1185">Reference proteome</keyword>
<evidence type="ECO:0000250" key="1">
    <source>
        <dbReference type="UniProtKB" id="P0A1P6"/>
    </source>
</evidence>
<evidence type="ECO:0000250" key="2">
    <source>
        <dbReference type="UniProtKB" id="P12425"/>
    </source>
</evidence>
<evidence type="ECO:0000250" key="3">
    <source>
        <dbReference type="UniProtKB" id="P77961"/>
    </source>
</evidence>
<evidence type="ECO:0000250" key="4">
    <source>
        <dbReference type="UniProtKB" id="P9WN39"/>
    </source>
</evidence>
<evidence type="ECO:0000250" key="5">
    <source>
        <dbReference type="UniProtKB" id="Q9HH09"/>
    </source>
</evidence>
<evidence type="ECO:0000255" key="6">
    <source>
        <dbReference type="PROSITE-ProRule" id="PRU01330"/>
    </source>
</evidence>
<evidence type="ECO:0000255" key="7">
    <source>
        <dbReference type="PROSITE-ProRule" id="PRU01331"/>
    </source>
</evidence>
<evidence type="ECO:0000269" key="8">
    <source>
    </source>
</evidence>
<evidence type="ECO:0000303" key="9">
    <source>
    </source>
</evidence>
<evidence type="ECO:0000305" key="10">
    <source>
    </source>
</evidence>
<accession>Q60182</accession>
<dbReference type="EC" id="6.3.1.2" evidence="8"/>
<dbReference type="EMBL" id="L77117">
    <property type="protein sequence ID" value="AAB99355.1"/>
    <property type="molecule type" value="Genomic_DNA"/>
</dbReference>
<dbReference type="PIR" id="A64468">
    <property type="entry name" value="A64468"/>
</dbReference>
<dbReference type="SMR" id="Q60182"/>
<dbReference type="FunCoup" id="Q60182">
    <property type="interactions" value="114"/>
</dbReference>
<dbReference type="STRING" id="243232.MJ_1346"/>
<dbReference type="PaxDb" id="243232-MJ_1346"/>
<dbReference type="EnsemblBacteria" id="AAB99355">
    <property type="protein sequence ID" value="AAB99355"/>
    <property type="gene ID" value="MJ_1346"/>
</dbReference>
<dbReference type="KEGG" id="mja:MJ_1346"/>
<dbReference type="eggNOG" id="arCOG01909">
    <property type="taxonomic scope" value="Archaea"/>
</dbReference>
<dbReference type="HOGENOM" id="CLU_017290_1_3_2"/>
<dbReference type="InParanoid" id="Q60182"/>
<dbReference type="PhylomeDB" id="Q60182"/>
<dbReference type="BRENDA" id="6.3.1.2">
    <property type="organism ID" value="3260"/>
</dbReference>
<dbReference type="Proteomes" id="UP000000805">
    <property type="component" value="Chromosome"/>
</dbReference>
<dbReference type="GO" id="GO:0005737">
    <property type="term" value="C:cytoplasm"/>
    <property type="evidence" value="ECO:0007669"/>
    <property type="project" value="UniProtKB-SubCell"/>
</dbReference>
<dbReference type="GO" id="GO:0005524">
    <property type="term" value="F:ATP binding"/>
    <property type="evidence" value="ECO:0007669"/>
    <property type="project" value="UniProtKB-KW"/>
</dbReference>
<dbReference type="GO" id="GO:0004356">
    <property type="term" value="F:glutamine synthetase activity"/>
    <property type="evidence" value="ECO:0007669"/>
    <property type="project" value="UniProtKB-EC"/>
</dbReference>
<dbReference type="GO" id="GO:0046872">
    <property type="term" value="F:metal ion binding"/>
    <property type="evidence" value="ECO:0007669"/>
    <property type="project" value="UniProtKB-KW"/>
</dbReference>
<dbReference type="GO" id="GO:0006542">
    <property type="term" value="P:glutamine biosynthetic process"/>
    <property type="evidence" value="ECO:0007669"/>
    <property type="project" value="InterPro"/>
</dbReference>
<dbReference type="FunFam" id="3.10.20.70:FF:000005">
    <property type="entry name" value="Glutamine synthetase"/>
    <property type="match status" value="1"/>
</dbReference>
<dbReference type="FunFam" id="3.30.590.10:FF:000003">
    <property type="entry name" value="Glutamine synthetase 2"/>
    <property type="match status" value="1"/>
</dbReference>
<dbReference type="Gene3D" id="3.10.20.70">
    <property type="entry name" value="Glutamine synthetase, N-terminal domain"/>
    <property type="match status" value="1"/>
</dbReference>
<dbReference type="Gene3D" id="3.30.590.10">
    <property type="entry name" value="Glutamine synthetase/guanido kinase, catalytic domain"/>
    <property type="match status" value="1"/>
</dbReference>
<dbReference type="InterPro" id="IPR008147">
    <property type="entry name" value="Gln_synt_N"/>
</dbReference>
<dbReference type="InterPro" id="IPR036651">
    <property type="entry name" value="Gln_synt_N_sf"/>
</dbReference>
<dbReference type="InterPro" id="IPR014746">
    <property type="entry name" value="Gln_synth/guanido_kin_cat_dom"/>
</dbReference>
<dbReference type="InterPro" id="IPR008146">
    <property type="entry name" value="Gln_synth_cat_dom"/>
</dbReference>
<dbReference type="InterPro" id="IPR027303">
    <property type="entry name" value="Gln_synth_gly_rich_site"/>
</dbReference>
<dbReference type="InterPro" id="IPR004809">
    <property type="entry name" value="Gln_synth_I"/>
</dbReference>
<dbReference type="InterPro" id="IPR027302">
    <property type="entry name" value="Gln_synth_N_conserv_site"/>
</dbReference>
<dbReference type="NCBIfam" id="TIGR00653">
    <property type="entry name" value="GlnA"/>
    <property type="match status" value="1"/>
</dbReference>
<dbReference type="PANTHER" id="PTHR43785">
    <property type="entry name" value="GAMMA-GLUTAMYLPUTRESCINE SYNTHETASE"/>
    <property type="match status" value="1"/>
</dbReference>
<dbReference type="PANTHER" id="PTHR43785:SF12">
    <property type="entry name" value="TYPE-1 GLUTAMINE SYNTHETASE 2"/>
    <property type="match status" value="1"/>
</dbReference>
<dbReference type="Pfam" id="PF00120">
    <property type="entry name" value="Gln-synt_C"/>
    <property type="match status" value="1"/>
</dbReference>
<dbReference type="Pfam" id="PF03951">
    <property type="entry name" value="Gln-synt_N"/>
    <property type="match status" value="1"/>
</dbReference>
<dbReference type="SMART" id="SM01230">
    <property type="entry name" value="Gln-synt_C"/>
    <property type="match status" value="1"/>
</dbReference>
<dbReference type="SUPFAM" id="SSF54368">
    <property type="entry name" value="Glutamine synthetase, N-terminal domain"/>
    <property type="match status" value="1"/>
</dbReference>
<dbReference type="SUPFAM" id="SSF55931">
    <property type="entry name" value="Glutamine synthetase/guanido kinase"/>
    <property type="match status" value="1"/>
</dbReference>
<dbReference type="PROSITE" id="PS00180">
    <property type="entry name" value="GLNA_1"/>
    <property type="match status" value="1"/>
</dbReference>
<dbReference type="PROSITE" id="PS00181">
    <property type="entry name" value="GLNA_ATP"/>
    <property type="match status" value="1"/>
</dbReference>
<dbReference type="PROSITE" id="PS51986">
    <property type="entry name" value="GS_BETA_GRASP"/>
    <property type="match status" value="1"/>
</dbReference>
<dbReference type="PROSITE" id="PS51987">
    <property type="entry name" value="GS_CATALYTIC"/>
    <property type="match status" value="1"/>
</dbReference>